<evidence type="ECO:0000255" key="1">
    <source>
        <dbReference type="HAMAP-Rule" id="MF_00693"/>
    </source>
</evidence>
<organism>
    <name type="scientific">Parabacteroides distasonis (strain ATCC 8503 / DSM 20701 / CIP 104284 / JCM 5825 / NCTC 11152)</name>
    <dbReference type="NCBI Taxonomy" id="435591"/>
    <lineage>
        <taxon>Bacteria</taxon>
        <taxon>Pseudomonadati</taxon>
        <taxon>Bacteroidota</taxon>
        <taxon>Bacteroidia</taxon>
        <taxon>Bacteroidales</taxon>
        <taxon>Tannerellaceae</taxon>
        <taxon>Parabacteroides</taxon>
    </lineage>
</organism>
<dbReference type="EMBL" id="CP000140">
    <property type="protein sequence ID" value="ABR42994.1"/>
    <property type="molecule type" value="Genomic_DNA"/>
</dbReference>
<dbReference type="RefSeq" id="WP_005856672.1">
    <property type="nucleotide sequence ID" value="NZ_LR215978.1"/>
</dbReference>
<dbReference type="SMR" id="A6LBD0"/>
<dbReference type="STRING" id="435591.BDI_1233"/>
<dbReference type="PaxDb" id="435591-BDI_1233"/>
<dbReference type="KEGG" id="pdi:BDI_1233"/>
<dbReference type="eggNOG" id="COG0217">
    <property type="taxonomic scope" value="Bacteria"/>
</dbReference>
<dbReference type="HOGENOM" id="CLU_062974_3_0_10"/>
<dbReference type="BioCyc" id="PDIS435591:G1G5A-1268-MONOMER"/>
<dbReference type="Proteomes" id="UP000000566">
    <property type="component" value="Chromosome"/>
</dbReference>
<dbReference type="GO" id="GO:0005829">
    <property type="term" value="C:cytosol"/>
    <property type="evidence" value="ECO:0007669"/>
    <property type="project" value="TreeGrafter"/>
</dbReference>
<dbReference type="GO" id="GO:0003677">
    <property type="term" value="F:DNA binding"/>
    <property type="evidence" value="ECO:0007669"/>
    <property type="project" value="UniProtKB-UniRule"/>
</dbReference>
<dbReference type="GO" id="GO:0006355">
    <property type="term" value="P:regulation of DNA-templated transcription"/>
    <property type="evidence" value="ECO:0007669"/>
    <property type="project" value="UniProtKB-UniRule"/>
</dbReference>
<dbReference type="FunFam" id="1.10.10.200:FF:000004">
    <property type="entry name" value="Probable transcriptional regulatory protein BSBG_02618"/>
    <property type="match status" value="1"/>
</dbReference>
<dbReference type="Gene3D" id="1.10.10.200">
    <property type="match status" value="1"/>
</dbReference>
<dbReference type="Gene3D" id="3.30.70.980">
    <property type="match status" value="2"/>
</dbReference>
<dbReference type="HAMAP" id="MF_00693">
    <property type="entry name" value="Transcrip_reg_TACO1"/>
    <property type="match status" value="1"/>
</dbReference>
<dbReference type="InterPro" id="IPR017856">
    <property type="entry name" value="Integrase-like_N"/>
</dbReference>
<dbReference type="InterPro" id="IPR048300">
    <property type="entry name" value="TACO1_YebC-like_2nd/3rd_dom"/>
</dbReference>
<dbReference type="InterPro" id="IPR049083">
    <property type="entry name" value="TACO1_YebC_N"/>
</dbReference>
<dbReference type="InterPro" id="IPR002876">
    <property type="entry name" value="Transcrip_reg_TACO1-like"/>
</dbReference>
<dbReference type="InterPro" id="IPR026564">
    <property type="entry name" value="Transcrip_reg_TACO1-like_dom3"/>
</dbReference>
<dbReference type="InterPro" id="IPR029072">
    <property type="entry name" value="YebC-like"/>
</dbReference>
<dbReference type="NCBIfam" id="NF001030">
    <property type="entry name" value="PRK00110.1"/>
    <property type="match status" value="1"/>
</dbReference>
<dbReference type="NCBIfam" id="NF009044">
    <property type="entry name" value="PRK12378.1"/>
    <property type="match status" value="1"/>
</dbReference>
<dbReference type="NCBIfam" id="TIGR01033">
    <property type="entry name" value="YebC/PmpR family DNA-binding transcriptional regulator"/>
    <property type="match status" value="1"/>
</dbReference>
<dbReference type="PANTHER" id="PTHR12532:SF6">
    <property type="entry name" value="TRANSCRIPTIONAL REGULATORY PROTEIN YEBC-RELATED"/>
    <property type="match status" value="1"/>
</dbReference>
<dbReference type="PANTHER" id="PTHR12532">
    <property type="entry name" value="TRANSLATIONAL ACTIVATOR OF CYTOCHROME C OXIDASE 1"/>
    <property type="match status" value="1"/>
</dbReference>
<dbReference type="Pfam" id="PF20772">
    <property type="entry name" value="TACO1_YebC_N"/>
    <property type="match status" value="1"/>
</dbReference>
<dbReference type="Pfam" id="PF01709">
    <property type="entry name" value="Transcrip_reg"/>
    <property type="match status" value="1"/>
</dbReference>
<dbReference type="SUPFAM" id="SSF75625">
    <property type="entry name" value="YebC-like"/>
    <property type="match status" value="1"/>
</dbReference>
<sequence>MGRAFEFRKARKFKRWGNMARVFTKLGKEITIAAKQGGPEPENNPRLRVLMQNAKKENMPKENVERAIKRAVSKDFTDYKEMNYEGYGPFGIAIFVETATDNTTRTVANVRSYFNKNGGSLGTSGSLEFLFDHKCVFHIAKKEDLSLEDLELELIDFGVDEVEEDEDEVVLYGEFAQNSAIQKYLEENGFEILSSEFVRIPNDLKEVTPEQRESIEKIIEKLEEDEDVQNVFHNMKEDDSEEE</sequence>
<accession>A6LBD0</accession>
<keyword id="KW-0963">Cytoplasm</keyword>
<keyword id="KW-0238">DNA-binding</keyword>
<keyword id="KW-1185">Reference proteome</keyword>
<keyword id="KW-0804">Transcription</keyword>
<keyword id="KW-0805">Transcription regulation</keyword>
<feature type="chain" id="PRO_1000045352" description="Probable transcriptional regulatory protein BDI_1233">
    <location>
        <begin position="1"/>
        <end position="243"/>
    </location>
</feature>
<proteinExistence type="inferred from homology"/>
<protein>
    <recommendedName>
        <fullName evidence="1">Probable transcriptional regulatory protein BDI_1233</fullName>
    </recommendedName>
</protein>
<gene>
    <name type="ordered locus">BDI_1233</name>
</gene>
<name>Y1233_PARD8</name>
<comment type="subcellular location">
    <subcellularLocation>
        <location evidence="1">Cytoplasm</location>
    </subcellularLocation>
</comment>
<comment type="similarity">
    <text evidence="1">Belongs to the TACO1 family.</text>
</comment>
<reference key="1">
    <citation type="journal article" date="2007" name="PLoS Biol.">
        <title>Evolution of symbiotic bacteria in the distal human intestine.</title>
        <authorList>
            <person name="Xu J."/>
            <person name="Mahowald M.A."/>
            <person name="Ley R.E."/>
            <person name="Lozupone C.A."/>
            <person name="Hamady M."/>
            <person name="Martens E.C."/>
            <person name="Henrissat B."/>
            <person name="Coutinho P.M."/>
            <person name="Minx P."/>
            <person name="Latreille P."/>
            <person name="Cordum H."/>
            <person name="Van Brunt A."/>
            <person name="Kim K."/>
            <person name="Fulton R.S."/>
            <person name="Fulton L.A."/>
            <person name="Clifton S.W."/>
            <person name="Wilson R.K."/>
            <person name="Knight R.D."/>
            <person name="Gordon J.I."/>
        </authorList>
    </citation>
    <scope>NUCLEOTIDE SEQUENCE [LARGE SCALE GENOMIC DNA]</scope>
    <source>
        <strain>ATCC 8503 / DSM 20701 / CIP 104284 / JCM 5825 / NCTC 11152</strain>
    </source>
</reference>